<accession>Q5QZ49</accession>
<organism>
    <name type="scientific">Idiomarina loihiensis (strain ATCC BAA-735 / DSM 15497 / L2-TR)</name>
    <dbReference type="NCBI Taxonomy" id="283942"/>
    <lineage>
        <taxon>Bacteria</taxon>
        <taxon>Pseudomonadati</taxon>
        <taxon>Pseudomonadota</taxon>
        <taxon>Gammaproteobacteria</taxon>
        <taxon>Alteromonadales</taxon>
        <taxon>Idiomarinaceae</taxon>
        <taxon>Idiomarina</taxon>
    </lineage>
</organism>
<feature type="chain" id="PRO_0000153373" description="Histidinol-phosphate aminotransferase 1">
    <location>
        <begin position="1"/>
        <end position="367"/>
    </location>
</feature>
<feature type="modified residue" description="N6-(pyridoxal phosphate)lysine" evidence="1">
    <location>
        <position position="229"/>
    </location>
</feature>
<keyword id="KW-0028">Amino-acid biosynthesis</keyword>
<keyword id="KW-0032">Aminotransferase</keyword>
<keyword id="KW-0368">Histidine biosynthesis</keyword>
<keyword id="KW-0663">Pyridoxal phosphate</keyword>
<keyword id="KW-1185">Reference proteome</keyword>
<keyword id="KW-0808">Transferase</keyword>
<dbReference type="EC" id="2.6.1.9" evidence="1"/>
<dbReference type="EMBL" id="AE017340">
    <property type="protein sequence ID" value="AAV82198.1"/>
    <property type="molecule type" value="Genomic_DNA"/>
</dbReference>
<dbReference type="RefSeq" id="WP_011234604.1">
    <property type="nucleotide sequence ID" value="NC_006512.1"/>
</dbReference>
<dbReference type="SMR" id="Q5QZ49"/>
<dbReference type="STRING" id="283942.IL1358"/>
<dbReference type="GeneID" id="41336534"/>
<dbReference type="KEGG" id="ilo:IL1358"/>
<dbReference type="eggNOG" id="COG0079">
    <property type="taxonomic scope" value="Bacteria"/>
</dbReference>
<dbReference type="HOGENOM" id="CLU_017584_3_3_6"/>
<dbReference type="OrthoDB" id="9813612at2"/>
<dbReference type="UniPathway" id="UPA00031">
    <property type="reaction ID" value="UER00012"/>
</dbReference>
<dbReference type="Proteomes" id="UP000001171">
    <property type="component" value="Chromosome"/>
</dbReference>
<dbReference type="GO" id="GO:0004400">
    <property type="term" value="F:histidinol-phosphate transaminase activity"/>
    <property type="evidence" value="ECO:0007669"/>
    <property type="project" value="UniProtKB-UniRule"/>
</dbReference>
<dbReference type="GO" id="GO:0030170">
    <property type="term" value="F:pyridoxal phosphate binding"/>
    <property type="evidence" value="ECO:0007669"/>
    <property type="project" value="InterPro"/>
</dbReference>
<dbReference type="GO" id="GO:0000105">
    <property type="term" value="P:L-histidine biosynthetic process"/>
    <property type="evidence" value="ECO:0007669"/>
    <property type="project" value="UniProtKB-UniRule"/>
</dbReference>
<dbReference type="CDD" id="cd00609">
    <property type="entry name" value="AAT_like"/>
    <property type="match status" value="1"/>
</dbReference>
<dbReference type="Gene3D" id="3.90.1150.10">
    <property type="entry name" value="Aspartate Aminotransferase, domain 1"/>
    <property type="match status" value="1"/>
</dbReference>
<dbReference type="Gene3D" id="3.40.640.10">
    <property type="entry name" value="Type I PLP-dependent aspartate aminotransferase-like (Major domain)"/>
    <property type="match status" value="1"/>
</dbReference>
<dbReference type="HAMAP" id="MF_01023">
    <property type="entry name" value="HisC_aminotrans_2"/>
    <property type="match status" value="1"/>
</dbReference>
<dbReference type="InterPro" id="IPR001917">
    <property type="entry name" value="Aminotrans_II_pyridoxalP_BS"/>
</dbReference>
<dbReference type="InterPro" id="IPR004839">
    <property type="entry name" value="Aminotransferase_I/II_large"/>
</dbReference>
<dbReference type="InterPro" id="IPR005861">
    <property type="entry name" value="HisP_aminotrans"/>
</dbReference>
<dbReference type="InterPro" id="IPR050106">
    <property type="entry name" value="HistidinolP_aminotransfase"/>
</dbReference>
<dbReference type="InterPro" id="IPR015424">
    <property type="entry name" value="PyrdxlP-dep_Trfase"/>
</dbReference>
<dbReference type="InterPro" id="IPR015421">
    <property type="entry name" value="PyrdxlP-dep_Trfase_major"/>
</dbReference>
<dbReference type="InterPro" id="IPR015422">
    <property type="entry name" value="PyrdxlP-dep_Trfase_small"/>
</dbReference>
<dbReference type="NCBIfam" id="TIGR01141">
    <property type="entry name" value="hisC"/>
    <property type="match status" value="1"/>
</dbReference>
<dbReference type="PANTHER" id="PTHR43643:SF3">
    <property type="entry name" value="HISTIDINOL-PHOSPHATE AMINOTRANSFERASE"/>
    <property type="match status" value="1"/>
</dbReference>
<dbReference type="PANTHER" id="PTHR43643">
    <property type="entry name" value="HISTIDINOL-PHOSPHATE AMINOTRANSFERASE 2"/>
    <property type="match status" value="1"/>
</dbReference>
<dbReference type="Pfam" id="PF00155">
    <property type="entry name" value="Aminotran_1_2"/>
    <property type="match status" value="1"/>
</dbReference>
<dbReference type="SUPFAM" id="SSF53383">
    <property type="entry name" value="PLP-dependent transferases"/>
    <property type="match status" value="1"/>
</dbReference>
<dbReference type="PROSITE" id="PS00599">
    <property type="entry name" value="AA_TRANSFER_CLASS_2"/>
    <property type="match status" value="1"/>
</dbReference>
<name>HIS81_IDILO</name>
<sequence length="367" mass="40505">MAEFNALELVNPGVKQLRPYQAGKPTSELQRELGLQHVVKLASNENPLGLSEKVKTALEAELTDLVRYPDANGYYLKSRLAELNEVGTQQITLGNGSNDVLEILARTFVSDKDEVIFSQHAFVVYPLVTQAIGAKPVAVPAVDYGHDLDGMAKAVTDKTKMIFIANPNNPTGTFLSTSALKSFLDKIPQHIIVVLDEAYYEYVPEDQRAPSVEWIKEYPNLVVSRTFSKAYGLAGLRAGYAVSHESVADVLNRIRQPFNMNSLSLKAAEVVLDDHAYLQKAVELNAQGMQLLTEFCEESGLNYIPSYGNFLTIEVGPGAEKLYDELLHEGVIVRPVGGYELPNHLRVSIGLPEENQAFIKAMKKLRG</sequence>
<evidence type="ECO:0000255" key="1">
    <source>
        <dbReference type="HAMAP-Rule" id="MF_01023"/>
    </source>
</evidence>
<comment type="catalytic activity">
    <reaction evidence="1">
        <text>L-histidinol phosphate + 2-oxoglutarate = 3-(imidazol-4-yl)-2-oxopropyl phosphate + L-glutamate</text>
        <dbReference type="Rhea" id="RHEA:23744"/>
        <dbReference type="ChEBI" id="CHEBI:16810"/>
        <dbReference type="ChEBI" id="CHEBI:29985"/>
        <dbReference type="ChEBI" id="CHEBI:57766"/>
        <dbReference type="ChEBI" id="CHEBI:57980"/>
        <dbReference type="EC" id="2.6.1.9"/>
    </reaction>
</comment>
<comment type="cofactor">
    <cofactor evidence="1">
        <name>pyridoxal 5'-phosphate</name>
        <dbReference type="ChEBI" id="CHEBI:597326"/>
    </cofactor>
</comment>
<comment type="pathway">
    <text evidence="1">Amino-acid biosynthesis; L-histidine biosynthesis; L-histidine from 5-phospho-alpha-D-ribose 1-diphosphate: step 7/9.</text>
</comment>
<comment type="subunit">
    <text evidence="1">Homodimer.</text>
</comment>
<comment type="similarity">
    <text evidence="1">Belongs to the class-II pyridoxal-phosphate-dependent aminotransferase family. Histidinol-phosphate aminotransferase subfamily.</text>
</comment>
<proteinExistence type="inferred from homology"/>
<reference key="1">
    <citation type="journal article" date="2004" name="Proc. Natl. Acad. Sci. U.S.A.">
        <title>Genome sequence of the deep-sea gamma-proteobacterium Idiomarina loihiensis reveals amino acid fermentation as a source of carbon and energy.</title>
        <authorList>
            <person name="Hou S."/>
            <person name="Saw J.H."/>
            <person name="Lee K.S."/>
            <person name="Freitas T.A."/>
            <person name="Belisle C."/>
            <person name="Kawarabayasi Y."/>
            <person name="Donachie S.P."/>
            <person name="Pikina A."/>
            <person name="Galperin M.Y."/>
            <person name="Koonin E.V."/>
            <person name="Makarova K.S."/>
            <person name="Omelchenko M.V."/>
            <person name="Sorokin A."/>
            <person name="Wolf Y.I."/>
            <person name="Li Q.X."/>
            <person name="Keum Y.S."/>
            <person name="Campbell S."/>
            <person name="Denery J."/>
            <person name="Aizawa S."/>
            <person name="Shibata S."/>
            <person name="Malahoff A."/>
            <person name="Alam M."/>
        </authorList>
    </citation>
    <scope>NUCLEOTIDE SEQUENCE [LARGE SCALE GENOMIC DNA]</scope>
    <source>
        <strain>ATCC BAA-735 / DSM 15497 / L2-TR</strain>
    </source>
</reference>
<gene>
    <name evidence="1" type="primary">hisC1</name>
    <name type="ordered locus">IL1358</name>
</gene>
<protein>
    <recommendedName>
        <fullName evidence="1">Histidinol-phosphate aminotransferase 1</fullName>
        <ecNumber evidence="1">2.6.1.9</ecNumber>
    </recommendedName>
    <alternativeName>
        <fullName evidence="1">Imidazole acetol-phosphate transaminase 1</fullName>
    </alternativeName>
</protein>